<comment type="function">
    <text evidence="1">Converts the preformed base xanthine, a product of nucleic acid breakdown, to xanthosine 5'-monophosphate (XMP), so it can be reused for RNA or DNA synthesis.</text>
</comment>
<comment type="catalytic activity">
    <reaction evidence="1">
        <text>XMP + diphosphate = xanthine + 5-phospho-alpha-D-ribose 1-diphosphate</text>
        <dbReference type="Rhea" id="RHEA:10800"/>
        <dbReference type="ChEBI" id="CHEBI:17712"/>
        <dbReference type="ChEBI" id="CHEBI:33019"/>
        <dbReference type="ChEBI" id="CHEBI:57464"/>
        <dbReference type="ChEBI" id="CHEBI:58017"/>
        <dbReference type="EC" id="2.4.2.22"/>
    </reaction>
</comment>
<comment type="pathway">
    <text evidence="1">Purine metabolism; XMP biosynthesis via salvage pathway; XMP from xanthine: step 1/1.</text>
</comment>
<comment type="subunit">
    <text evidence="1">Homodimer.</text>
</comment>
<comment type="subcellular location">
    <subcellularLocation>
        <location evidence="1">Cytoplasm</location>
    </subcellularLocation>
</comment>
<comment type="similarity">
    <text evidence="1">Belongs to the purine/pyrimidine phosphoribosyltransferase family. Xpt subfamily.</text>
</comment>
<gene>
    <name evidence="1" type="primary">xpt</name>
    <name type="ordered locus">lp_1139</name>
</gene>
<name>XPT_LACPL</name>
<organism>
    <name type="scientific">Lactiplantibacillus plantarum (strain ATCC BAA-793 / NCIMB 8826 / WCFS1)</name>
    <name type="common">Lactobacillus plantarum</name>
    <dbReference type="NCBI Taxonomy" id="220668"/>
    <lineage>
        <taxon>Bacteria</taxon>
        <taxon>Bacillati</taxon>
        <taxon>Bacillota</taxon>
        <taxon>Bacilli</taxon>
        <taxon>Lactobacillales</taxon>
        <taxon>Lactobacillaceae</taxon>
        <taxon>Lactiplantibacillus</taxon>
    </lineage>
</organism>
<proteinExistence type="inferred from homology"/>
<feature type="chain" id="PRO_0000339709" description="Xanthine phosphoribosyltransferase">
    <location>
        <begin position="1"/>
        <end position="195"/>
    </location>
</feature>
<feature type="binding site" evidence="1">
    <location>
        <position position="20"/>
    </location>
    <ligand>
        <name>xanthine</name>
        <dbReference type="ChEBI" id="CHEBI:17712"/>
    </ligand>
</feature>
<feature type="binding site" evidence="1">
    <location>
        <position position="27"/>
    </location>
    <ligand>
        <name>xanthine</name>
        <dbReference type="ChEBI" id="CHEBI:17712"/>
    </ligand>
</feature>
<feature type="binding site" evidence="1">
    <location>
        <begin position="128"/>
        <end position="132"/>
    </location>
    <ligand>
        <name>5-phospho-alpha-D-ribose 1-diphosphate</name>
        <dbReference type="ChEBI" id="CHEBI:58017"/>
    </ligand>
</feature>
<feature type="binding site" evidence="1">
    <location>
        <position position="156"/>
    </location>
    <ligand>
        <name>xanthine</name>
        <dbReference type="ChEBI" id="CHEBI:17712"/>
    </ligand>
</feature>
<protein>
    <recommendedName>
        <fullName evidence="1">Xanthine phosphoribosyltransferase</fullName>
        <shortName evidence="1">XPRTase</shortName>
        <ecNumber evidence="1">2.4.2.22</ecNumber>
    </recommendedName>
</protein>
<dbReference type="EC" id="2.4.2.22" evidence="1"/>
<dbReference type="EMBL" id="AL935263">
    <property type="protein sequence ID" value="CCC78531.1"/>
    <property type="molecule type" value="Genomic_DNA"/>
</dbReference>
<dbReference type="RefSeq" id="WP_003641335.1">
    <property type="nucleotide sequence ID" value="NC_004567.2"/>
</dbReference>
<dbReference type="RefSeq" id="YP_004889045.1">
    <property type="nucleotide sequence ID" value="NC_004567.2"/>
</dbReference>
<dbReference type="SMR" id="Q88XQ4"/>
<dbReference type="STRING" id="220668.lp_1139"/>
<dbReference type="EnsemblBacteria" id="CCC78531">
    <property type="protein sequence ID" value="CCC78531"/>
    <property type="gene ID" value="lp_1139"/>
</dbReference>
<dbReference type="KEGG" id="lpl:lp_1139"/>
<dbReference type="PATRIC" id="fig|220668.9.peg.962"/>
<dbReference type="eggNOG" id="COG0503">
    <property type="taxonomic scope" value="Bacteria"/>
</dbReference>
<dbReference type="HOGENOM" id="CLU_099015_0_0_9"/>
<dbReference type="OrthoDB" id="9790678at2"/>
<dbReference type="PhylomeDB" id="Q88XQ4"/>
<dbReference type="UniPathway" id="UPA00602">
    <property type="reaction ID" value="UER00658"/>
</dbReference>
<dbReference type="Proteomes" id="UP000000432">
    <property type="component" value="Chromosome"/>
</dbReference>
<dbReference type="GO" id="GO:0005737">
    <property type="term" value="C:cytoplasm"/>
    <property type="evidence" value="ECO:0007669"/>
    <property type="project" value="UniProtKB-SubCell"/>
</dbReference>
<dbReference type="GO" id="GO:0000310">
    <property type="term" value="F:xanthine phosphoribosyltransferase activity"/>
    <property type="evidence" value="ECO:0007669"/>
    <property type="project" value="UniProtKB-UniRule"/>
</dbReference>
<dbReference type="GO" id="GO:0006166">
    <property type="term" value="P:purine ribonucleoside salvage"/>
    <property type="evidence" value="ECO:0007669"/>
    <property type="project" value="UniProtKB-KW"/>
</dbReference>
<dbReference type="GO" id="GO:0046110">
    <property type="term" value="P:xanthine metabolic process"/>
    <property type="evidence" value="ECO:0007669"/>
    <property type="project" value="InterPro"/>
</dbReference>
<dbReference type="GO" id="GO:0032265">
    <property type="term" value="P:XMP salvage"/>
    <property type="evidence" value="ECO:0007669"/>
    <property type="project" value="UniProtKB-UniRule"/>
</dbReference>
<dbReference type="CDD" id="cd06223">
    <property type="entry name" value="PRTases_typeI"/>
    <property type="match status" value="1"/>
</dbReference>
<dbReference type="Gene3D" id="3.40.50.2020">
    <property type="match status" value="1"/>
</dbReference>
<dbReference type="HAMAP" id="MF_01184">
    <property type="entry name" value="XPRTase"/>
    <property type="match status" value="1"/>
</dbReference>
<dbReference type="InterPro" id="IPR000836">
    <property type="entry name" value="PRibTrfase_dom"/>
</dbReference>
<dbReference type="InterPro" id="IPR029057">
    <property type="entry name" value="PRTase-like"/>
</dbReference>
<dbReference type="InterPro" id="IPR050118">
    <property type="entry name" value="Pur/Pyrimidine_PRTase"/>
</dbReference>
<dbReference type="InterPro" id="IPR010079">
    <property type="entry name" value="Xanthine_PRibTrfase"/>
</dbReference>
<dbReference type="NCBIfam" id="NF006671">
    <property type="entry name" value="PRK09219.1"/>
    <property type="match status" value="1"/>
</dbReference>
<dbReference type="NCBIfam" id="TIGR01744">
    <property type="entry name" value="XPRTase"/>
    <property type="match status" value="1"/>
</dbReference>
<dbReference type="PANTHER" id="PTHR43864">
    <property type="entry name" value="HYPOXANTHINE/GUANINE PHOSPHORIBOSYLTRANSFERASE"/>
    <property type="match status" value="1"/>
</dbReference>
<dbReference type="PANTHER" id="PTHR43864:SF1">
    <property type="entry name" value="XANTHINE PHOSPHORIBOSYLTRANSFERASE"/>
    <property type="match status" value="1"/>
</dbReference>
<dbReference type="SUPFAM" id="SSF53271">
    <property type="entry name" value="PRTase-like"/>
    <property type="match status" value="1"/>
</dbReference>
<keyword id="KW-0963">Cytoplasm</keyword>
<keyword id="KW-0328">Glycosyltransferase</keyword>
<keyword id="KW-0660">Purine salvage</keyword>
<keyword id="KW-1185">Reference proteome</keyword>
<keyword id="KW-0808">Transferase</keyword>
<reference key="1">
    <citation type="journal article" date="2003" name="Proc. Natl. Acad. Sci. U.S.A.">
        <title>Complete genome sequence of Lactobacillus plantarum WCFS1.</title>
        <authorList>
            <person name="Kleerebezem M."/>
            <person name="Boekhorst J."/>
            <person name="van Kranenburg R."/>
            <person name="Molenaar D."/>
            <person name="Kuipers O.P."/>
            <person name="Leer R."/>
            <person name="Tarchini R."/>
            <person name="Peters S.A."/>
            <person name="Sandbrink H.M."/>
            <person name="Fiers M.W.E.J."/>
            <person name="Stiekema W."/>
            <person name="Klein Lankhorst R.M."/>
            <person name="Bron P.A."/>
            <person name="Hoffer S.M."/>
            <person name="Nierop Groot M.N."/>
            <person name="Kerkhoven R."/>
            <person name="De Vries M."/>
            <person name="Ursing B."/>
            <person name="De Vos W.M."/>
            <person name="Siezen R.J."/>
        </authorList>
    </citation>
    <scope>NUCLEOTIDE SEQUENCE [LARGE SCALE GENOMIC DNA]</scope>
    <source>
        <strain>ATCC BAA-793 / NCIMB 8826 / WCFS1</strain>
    </source>
</reference>
<reference key="2">
    <citation type="journal article" date="2012" name="J. Bacteriol.">
        <title>Complete resequencing and reannotation of the Lactobacillus plantarum WCFS1 genome.</title>
        <authorList>
            <person name="Siezen R.J."/>
            <person name="Francke C."/>
            <person name="Renckens B."/>
            <person name="Boekhorst J."/>
            <person name="Wels M."/>
            <person name="Kleerebezem M."/>
            <person name="van Hijum S.A."/>
        </authorList>
    </citation>
    <scope>NUCLEOTIDE SEQUENCE [LARGE SCALE GENOMIC DNA]</scope>
    <scope>GENOME REANNOTATION</scope>
    <source>
        <strain>ATCC BAA-793 / NCIMB 8826 / WCFS1</strain>
    </source>
</reference>
<accession>Q88XQ4</accession>
<accession>F9UMU2</accession>
<sequence length="195" mass="21454">MRELEERILKDGRVLPGEVLKVDGFLNHQVDPDLMFAMGTEFAHLFQDAGVTKILTVESSGIAPAVMAGLAMHVPVVFARKHKSVTLIDDLYTAEVYSYTKKTSNHISIAKKFLQADDQVLLIDDFLANGQAVQGMFEICDKAHVKIAGVGIVIEKVFQTGHQLIADRGVRLESLAQITSFDGDRVHFASEDTQA</sequence>
<evidence type="ECO:0000255" key="1">
    <source>
        <dbReference type="HAMAP-Rule" id="MF_01184"/>
    </source>
</evidence>